<organism>
    <name type="scientific">Xenorhabdus bovienii (strain SS-2004)</name>
    <name type="common">Xenorhabdus nematophila subsp. bovienii</name>
    <dbReference type="NCBI Taxonomy" id="406818"/>
    <lineage>
        <taxon>Bacteria</taxon>
        <taxon>Pseudomonadati</taxon>
        <taxon>Pseudomonadota</taxon>
        <taxon>Gammaproteobacteria</taxon>
        <taxon>Enterobacterales</taxon>
        <taxon>Morganellaceae</taxon>
        <taxon>Xenorhabdus</taxon>
    </lineage>
</organism>
<accession>D3UX49</accession>
<comment type="cofactor">
    <cofactor evidence="2">
        <name>Fe(2+)</name>
        <dbReference type="ChEBI" id="CHEBI:29033"/>
    </cofactor>
    <text evidence="2">Binds 2 Fe(2+) ions per subunit.</text>
</comment>
<comment type="similarity">
    <text evidence="3">Belongs to the cyclic nucleotide phosphodiesterase class-III family.</text>
</comment>
<feature type="chain" id="PRO_0000413384" description="Probable cyclic nucleotide phosphodiesterase XBJ1_0953">
    <location>
        <begin position="1"/>
        <end position="247"/>
    </location>
</feature>
<feature type="binding site" evidence="2">
    <location>
        <position position="8"/>
    </location>
    <ligand>
        <name>Fe cation</name>
        <dbReference type="ChEBI" id="CHEBI:24875"/>
        <label>1</label>
    </ligand>
</feature>
<feature type="binding site" evidence="1">
    <location>
        <position position="10"/>
    </location>
    <ligand>
        <name>AMP</name>
        <dbReference type="ChEBI" id="CHEBI:456215"/>
    </ligand>
</feature>
<feature type="binding site" evidence="2">
    <location>
        <position position="10"/>
    </location>
    <ligand>
        <name>Fe cation</name>
        <dbReference type="ChEBI" id="CHEBI:24875"/>
        <label>1</label>
    </ligand>
</feature>
<feature type="binding site" evidence="1">
    <location>
        <position position="52"/>
    </location>
    <ligand>
        <name>AMP</name>
        <dbReference type="ChEBI" id="CHEBI:456215"/>
    </ligand>
</feature>
<feature type="binding site" evidence="2">
    <location>
        <position position="52"/>
    </location>
    <ligand>
        <name>Fe cation</name>
        <dbReference type="ChEBI" id="CHEBI:24875"/>
        <label>1</label>
    </ligand>
</feature>
<feature type="binding site" evidence="2">
    <location>
        <position position="52"/>
    </location>
    <ligand>
        <name>Fe cation</name>
        <dbReference type="ChEBI" id="CHEBI:24875"/>
        <label>2</label>
    </ligand>
</feature>
<feature type="binding site" evidence="1">
    <location>
        <begin position="82"/>
        <end position="83"/>
    </location>
    <ligand>
        <name>AMP</name>
        <dbReference type="ChEBI" id="CHEBI:456215"/>
    </ligand>
</feature>
<feature type="binding site" evidence="2">
    <location>
        <position position="82"/>
    </location>
    <ligand>
        <name>Fe cation</name>
        <dbReference type="ChEBI" id="CHEBI:24875"/>
        <label>2</label>
    </ligand>
</feature>
<feature type="binding site" evidence="2">
    <location>
        <position position="154"/>
    </location>
    <ligand>
        <name>Fe cation</name>
        <dbReference type="ChEBI" id="CHEBI:24875"/>
        <label>2</label>
    </ligand>
</feature>
<feature type="binding site" evidence="2">
    <location>
        <position position="192"/>
    </location>
    <ligand>
        <name>Fe cation</name>
        <dbReference type="ChEBI" id="CHEBI:24875"/>
        <label>2</label>
    </ligand>
</feature>
<feature type="binding site" evidence="1">
    <location>
        <position position="194"/>
    </location>
    <ligand>
        <name>AMP</name>
        <dbReference type="ChEBI" id="CHEBI:456215"/>
    </ligand>
</feature>
<feature type="binding site" evidence="2">
    <location>
        <position position="194"/>
    </location>
    <ligand>
        <name>Fe cation</name>
        <dbReference type="ChEBI" id="CHEBI:24875"/>
        <label>1</label>
    </ligand>
</feature>
<evidence type="ECO:0000250" key="1">
    <source>
        <dbReference type="UniProtKB" id="P9WP65"/>
    </source>
</evidence>
<evidence type="ECO:0000250" key="2">
    <source>
        <dbReference type="UniProtKB" id="Q6XBH1"/>
    </source>
</evidence>
<evidence type="ECO:0000305" key="3"/>
<protein>
    <recommendedName>
        <fullName evidence="1">Probable cyclic nucleotide phosphodiesterase XBJ1_0953</fullName>
        <ecNumber evidence="1">3.1.4.-</ecNumber>
    </recommendedName>
</protein>
<reference key="1">
    <citation type="journal article" date="2011" name="PLoS ONE">
        <title>The entomopathogenic bacterial endosymbionts xenorhabdus and photorhabdus: convergent lifestyles from divergent genomes.</title>
        <authorList>
            <person name="Chaston J.M."/>
            <person name="Suen G."/>
            <person name="Tucker S.L."/>
            <person name="Andersen A.W."/>
            <person name="Bhasin A."/>
            <person name="Bode E."/>
            <person name="Bode H.B."/>
            <person name="Brachmann A.O."/>
            <person name="Cowles C.E."/>
            <person name="Cowles K.N."/>
            <person name="Darby C."/>
            <person name="de Leon L."/>
            <person name="Drace K."/>
            <person name="Du Z."/>
            <person name="Givaudan A."/>
            <person name="Herbert Tran E.E."/>
            <person name="Jewell K.A."/>
            <person name="Knack J.J."/>
            <person name="Krasomil-Osterfeld K.C."/>
            <person name="Kukor R."/>
            <person name="Lanois A."/>
            <person name="Latreille P."/>
            <person name="Leimgruber N.K."/>
            <person name="Lipke C.M."/>
            <person name="Liu R."/>
            <person name="Lu X."/>
            <person name="Martens E.C."/>
            <person name="Marri P.R."/>
            <person name="Medigue C."/>
            <person name="Menard M.L."/>
            <person name="Miller N.M."/>
            <person name="Morales-Soto N."/>
            <person name="Norton S."/>
            <person name="Ogier J.C."/>
            <person name="Orchard S.S."/>
            <person name="Park D."/>
            <person name="Park Y."/>
            <person name="Qurollo B.A."/>
            <person name="Sugar D.R."/>
            <person name="Richards G.R."/>
            <person name="Rouy Z."/>
            <person name="Slominski B."/>
            <person name="Slominski K."/>
            <person name="Snyder H."/>
            <person name="Tjaden B.C."/>
            <person name="van der Hoeven R."/>
            <person name="Welch R.D."/>
            <person name="Wheeler C."/>
            <person name="Xiang B."/>
            <person name="Barbazuk B."/>
            <person name="Gaudriault S."/>
            <person name="Goodner B."/>
            <person name="Slater S.C."/>
            <person name="Forst S."/>
            <person name="Goldman B.S."/>
            <person name="Goodrich-Blair H."/>
        </authorList>
    </citation>
    <scope>NUCLEOTIDE SEQUENCE [LARGE SCALE GENOMIC DNA]</scope>
    <source>
        <strain>SS-2004</strain>
    </source>
</reference>
<dbReference type="EC" id="3.1.4.-" evidence="1"/>
<dbReference type="EMBL" id="FN667741">
    <property type="protein sequence ID" value="CBJ80094.1"/>
    <property type="molecule type" value="Genomic_DNA"/>
</dbReference>
<dbReference type="RefSeq" id="WP_012987516.1">
    <property type="nucleotide sequence ID" value="NC_013892.1"/>
</dbReference>
<dbReference type="SMR" id="D3UX49"/>
<dbReference type="STRING" id="406818.XBJ1_0953"/>
<dbReference type="KEGG" id="xbo:XBJ1_0953"/>
<dbReference type="PATRIC" id="fig|406818.4.peg.866"/>
<dbReference type="eggNOG" id="COG1409">
    <property type="taxonomic scope" value="Bacteria"/>
</dbReference>
<dbReference type="HOGENOM" id="CLU_070320_0_0_6"/>
<dbReference type="Proteomes" id="UP000002045">
    <property type="component" value="Chromosome"/>
</dbReference>
<dbReference type="GO" id="GO:0004115">
    <property type="term" value="F:3',5'-cyclic-AMP phosphodiesterase activity"/>
    <property type="evidence" value="ECO:0007669"/>
    <property type="project" value="UniProtKB-EC"/>
</dbReference>
<dbReference type="GO" id="GO:0046872">
    <property type="term" value="F:metal ion binding"/>
    <property type="evidence" value="ECO:0007669"/>
    <property type="project" value="UniProtKB-KW"/>
</dbReference>
<dbReference type="GO" id="GO:0000166">
    <property type="term" value="F:nucleotide binding"/>
    <property type="evidence" value="ECO:0007669"/>
    <property type="project" value="UniProtKB-KW"/>
</dbReference>
<dbReference type="Gene3D" id="3.60.21.10">
    <property type="match status" value="1"/>
</dbReference>
<dbReference type="InterPro" id="IPR004843">
    <property type="entry name" value="Calcineurin-like_PHP_ApaH"/>
</dbReference>
<dbReference type="InterPro" id="IPR050884">
    <property type="entry name" value="CNP_phosphodiesterase-III"/>
</dbReference>
<dbReference type="InterPro" id="IPR029052">
    <property type="entry name" value="Metallo-depent_PP-like"/>
</dbReference>
<dbReference type="PANTHER" id="PTHR42988:SF2">
    <property type="entry name" value="CYCLIC NUCLEOTIDE PHOSPHODIESTERASE CBUA0032-RELATED"/>
    <property type="match status" value="1"/>
</dbReference>
<dbReference type="PANTHER" id="PTHR42988">
    <property type="entry name" value="PHOSPHOHYDROLASE"/>
    <property type="match status" value="1"/>
</dbReference>
<dbReference type="Pfam" id="PF00149">
    <property type="entry name" value="Metallophos"/>
    <property type="match status" value="1"/>
</dbReference>
<dbReference type="SUPFAM" id="SSF56300">
    <property type="entry name" value="Metallo-dependent phosphatases"/>
    <property type="match status" value="1"/>
</dbReference>
<gene>
    <name type="ordered locus">XBJ1_0953</name>
</gene>
<name>CNPD3_XENBS</name>
<keyword id="KW-0378">Hydrolase</keyword>
<keyword id="KW-0408">Iron</keyword>
<keyword id="KW-0479">Metal-binding</keyword>
<keyword id="KW-0547">Nucleotide-binding</keyword>
<sequence>MKVVNLTDIHLTRNRDKKLFDVNTYDNFDFVCEEIHRIQNLTEIELIIVSGDIANDGDVEAYRYFLNKMESLKTPYISILGNHDLNKNFEITLAEEKPKYIISSREYNNDNWYITAVDTVVEGEDYGFITQDNLAELERKIITNSNFNIAIFMHHHAMPVGTPIVDSCMLNNAKAILELCEKHRVKFIGSGHAHTPRVWHHNNMTACVSPAVSFQWLSGTNTVKISKGFGFNVIDFSPDLSITSCIY</sequence>
<proteinExistence type="inferred from homology"/>